<feature type="chain" id="PRO_1000202697" description="Peptide chain release factor 1">
    <location>
        <begin position="1"/>
        <end position="360"/>
    </location>
</feature>
<feature type="region of interest" description="Disordered" evidence="2">
    <location>
        <begin position="285"/>
        <end position="311"/>
    </location>
</feature>
<feature type="compositionally biased region" description="Basic and acidic residues" evidence="2">
    <location>
        <begin position="292"/>
        <end position="308"/>
    </location>
</feature>
<feature type="modified residue" description="N5-methylglutamine" evidence="1">
    <location>
        <position position="235"/>
    </location>
</feature>
<accession>C4K7Y8</accession>
<reference key="1">
    <citation type="journal article" date="2009" name="Proc. Natl. Acad. Sci. U.S.A.">
        <title>Hamiltonella defensa, genome evolution of protective bacterial endosymbiont from pathogenic ancestors.</title>
        <authorList>
            <person name="Degnan P.H."/>
            <person name="Yu Y."/>
            <person name="Sisneros N."/>
            <person name="Wing R.A."/>
            <person name="Moran N.A."/>
        </authorList>
    </citation>
    <scope>NUCLEOTIDE SEQUENCE [LARGE SCALE GENOMIC DNA]</scope>
    <source>
        <strain>5AT</strain>
    </source>
</reference>
<gene>
    <name evidence="1" type="primary">prfA</name>
    <name type="ordered locus">HDEF_2117</name>
</gene>
<sequence>MKPSFIKKLEALQERHEELQAHLADPLTIQDQERFRMMSREYAQLSNIAELFTEWLKLQNDMIAAKSLLQDPEMHEMATEELEKAKIQSEQLTQQLQILLLPKDIDDSRSCFLEIRAGTGGDEAAIFAGDLFRMYARYAESRSWKMEIISAHEGEHGGYKEMITKISGEGVYGQLKFESGGHRVQRVPTTESQGRIHTSACTVAVMPEIPEEELPKITLSDLRIDTFRSSGAGGQHVNTTDSAIRITHLPTGIVVECQDERSQHKNKAKAMSVLGARMHAAQVQKRQQAQASERRNLLGSGDRSDRHRTYNFPQGRVTDHRINLTLYRLDEVMSGKLDILIHPLLREHQADLLSALSEQE</sequence>
<keyword id="KW-0963">Cytoplasm</keyword>
<keyword id="KW-0488">Methylation</keyword>
<keyword id="KW-0648">Protein biosynthesis</keyword>
<proteinExistence type="inferred from homology"/>
<dbReference type="EMBL" id="CP001277">
    <property type="protein sequence ID" value="ACQ68681.1"/>
    <property type="molecule type" value="Genomic_DNA"/>
</dbReference>
<dbReference type="RefSeq" id="WP_015874426.1">
    <property type="nucleotide sequence ID" value="NC_012751.1"/>
</dbReference>
<dbReference type="SMR" id="C4K7Y8"/>
<dbReference type="STRING" id="572265.HDEF_2117"/>
<dbReference type="GeneID" id="66261655"/>
<dbReference type="KEGG" id="hde:HDEF_2117"/>
<dbReference type="eggNOG" id="COG0216">
    <property type="taxonomic scope" value="Bacteria"/>
</dbReference>
<dbReference type="HOGENOM" id="CLU_036856_0_1_6"/>
<dbReference type="Proteomes" id="UP000002334">
    <property type="component" value="Chromosome"/>
</dbReference>
<dbReference type="GO" id="GO:0005737">
    <property type="term" value="C:cytoplasm"/>
    <property type="evidence" value="ECO:0007669"/>
    <property type="project" value="UniProtKB-SubCell"/>
</dbReference>
<dbReference type="GO" id="GO:0016149">
    <property type="term" value="F:translation release factor activity, codon specific"/>
    <property type="evidence" value="ECO:0007669"/>
    <property type="project" value="UniProtKB-UniRule"/>
</dbReference>
<dbReference type="FunFam" id="3.30.160.20:FF:000004">
    <property type="entry name" value="Peptide chain release factor 1"/>
    <property type="match status" value="1"/>
</dbReference>
<dbReference type="FunFam" id="3.30.70.1660:FF:000002">
    <property type="entry name" value="Peptide chain release factor 1"/>
    <property type="match status" value="1"/>
</dbReference>
<dbReference type="FunFam" id="3.30.70.1660:FF:000004">
    <property type="entry name" value="Peptide chain release factor 1"/>
    <property type="match status" value="1"/>
</dbReference>
<dbReference type="Gene3D" id="3.30.160.20">
    <property type="match status" value="1"/>
</dbReference>
<dbReference type="Gene3D" id="3.30.70.1660">
    <property type="match status" value="1"/>
</dbReference>
<dbReference type="Gene3D" id="6.10.140.1950">
    <property type="match status" value="1"/>
</dbReference>
<dbReference type="HAMAP" id="MF_00093">
    <property type="entry name" value="Rel_fac_1"/>
    <property type="match status" value="1"/>
</dbReference>
<dbReference type="InterPro" id="IPR005139">
    <property type="entry name" value="PCRF"/>
</dbReference>
<dbReference type="InterPro" id="IPR000352">
    <property type="entry name" value="Pep_chain_release_fac_I"/>
</dbReference>
<dbReference type="InterPro" id="IPR045853">
    <property type="entry name" value="Pep_chain_release_fac_I_sf"/>
</dbReference>
<dbReference type="InterPro" id="IPR050057">
    <property type="entry name" value="Prokaryotic/Mito_RF"/>
</dbReference>
<dbReference type="InterPro" id="IPR004373">
    <property type="entry name" value="RF-1"/>
</dbReference>
<dbReference type="NCBIfam" id="TIGR00019">
    <property type="entry name" value="prfA"/>
    <property type="match status" value="1"/>
</dbReference>
<dbReference type="NCBIfam" id="NF001859">
    <property type="entry name" value="PRK00591.1"/>
    <property type="match status" value="1"/>
</dbReference>
<dbReference type="PANTHER" id="PTHR43804">
    <property type="entry name" value="LD18447P"/>
    <property type="match status" value="1"/>
</dbReference>
<dbReference type="PANTHER" id="PTHR43804:SF7">
    <property type="entry name" value="LD18447P"/>
    <property type="match status" value="1"/>
</dbReference>
<dbReference type="Pfam" id="PF03462">
    <property type="entry name" value="PCRF"/>
    <property type="match status" value="1"/>
</dbReference>
<dbReference type="Pfam" id="PF00472">
    <property type="entry name" value="RF-1"/>
    <property type="match status" value="1"/>
</dbReference>
<dbReference type="SMART" id="SM00937">
    <property type="entry name" value="PCRF"/>
    <property type="match status" value="1"/>
</dbReference>
<dbReference type="SUPFAM" id="SSF75620">
    <property type="entry name" value="Release factor"/>
    <property type="match status" value="1"/>
</dbReference>
<dbReference type="PROSITE" id="PS00745">
    <property type="entry name" value="RF_PROK_I"/>
    <property type="match status" value="1"/>
</dbReference>
<name>RF1_HAMD5</name>
<protein>
    <recommendedName>
        <fullName evidence="1">Peptide chain release factor 1</fullName>
        <shortName evidence="1">RF-1</shortName>
    </recommendedName>
</protein>
<evidence type="ECO:0000255" key="1">
    <source>
        <dbReference type="HAMAP-Rule" id="MF_00093"/>
    </source>
</evidence>
<evidence type="ECO:0000256" key="2">
    <source>
        <dbReference type="SAM" id="MobiDB-lite"/>
    </source>
</evidence>
<comment type="function">
    <text evidence="1">Peptide chain release factor 1 directs the termination of translation in response to the peptide chain termination codons UAG and UAA.</text>
</comment>
<comment type="subcellular location">
    <subcellularLocation>
        <location evidence="1">Cytoplasm</location>
    </subcellularLocation>
</comment>
<comment type="PTM">
    <text evidence="1">Methylated by PrmC. Methylation increases the termination efficiency of RF1.</text>
</comment>
<comment type="similarity">
    <text evidence="1">Belongs to the prokaryotic/mitochondrial release factor family.</text>
</comment>
<organism>
    <name type="scientific">Hamiltonella defensa subsp. Acyrthosiphon pisum (strain 5AT)</name>
    <dbReference type="NCBI Taxonomy" id="572265"/>
    <lineage>
        <taxon>Bacteria</taxon>
        <taxon>Pseudomonadati</taxon>
        <taxon>Pseudomonadota</taxon>
        <taxon>Gammaproteobacteria</taxon>
        <taxon>Enterobacterales</taxon>
        <taxon>Enterobacteriaceae</taxon>
        <taxon>aphid secondary symbionts</taxon>
        <taxon>Candidatus Hamiltonella</taxon>
    </lineage>
</organism>